<protein>
    <recommendedName>
        <fullName evidence="1">Ribosome maturation factor RimM</fullName>
    </recommendedName>
</protein>
<sequence>MPDLQIGRVIKPHGVKGEVVVDPSTDHVPERFAIGEALRAVQTGKERQLTVTGMRRHQNRLLVTFEEIRDRDEAESLRGARFMAAPLHDDSDDGYYDHELIGLRVLNVGSVDADTANRRAYEGEQPEPVDIGEVTGVSHGPAGATLEVAVDADADLPTAGSTILIPFKLAIVPIVDLDNEALVVTPPEGLLELA</sequence>
<organism>
    <name type="scientific">Corynebacterium urealyticum (strain ATCC 43042 / DSM 7109)</name>
    <dbReference type="NCBI Taxonomy" id="504474"/>
    <lineage>
        <taxon>Bacteria</taxon>
        <taxon>Bacillati</taxon>
        <taxon>Actinomycetota</taxon>
        <taxon>Actinomycetes</taxon>
        <taxon>Mycobacteriales</taxon>
        <taxon>Corynebacteriaceae</taxon>
        <taxon>Corynebacterium</taxon>
    </lineage>
</organism>
<comment type="function">
    <text evidence="1">An accessory protein needed during the final step in the assembly of 30S ribosomal subunit, possibly for assembly of the head region. Essential for efficient processing of 16S rRNA. May be needed both before and after RbfA during the maturation of 16S rRNA. It has affinity for free ribosomal 30S subunits but not for 70S ribosomes.</text>
</comment>
<comment type="subunit">
    <text evidence="1">Binds ribosomal protein uS19.</text>
</comment>
<comment type="subcellular location">
    <subcellularLocation>
        <location evidence="1">Cytoplasm</location>
    </subcellularLocation>
</comment>
<comment type="domain">
    <text evidence="1">The PRC barrel domain binds ribosomal protein uS19.</text>
</comment>
<comment type="similarity">
    <text evidence="1">Belongs to the RimM family.</text>
</comment>
<keyword id="KW-0143">Chaperone</keyword>
<keyword id="KW-0963">Cytoplasm</keyword>
<keyword id="KW-1185">Reference proteome</keyword>
<keyword id="KW-0690">Ribosome biogenesis</keyword>
<keyword id="KW-0698">rRNA processing</keyword>
<feature type="chain" id="PRO_0000351751" description="Ribosome maturation factor RimM">
    <location>
        <begin position="1"/>
        <end position="194"/>
    </location>
</feature>
<feature type="domain" description="PRC barrel" evidence="1">
    <location>
        <begin position="92"/>
        <end position="190"/>
    </location>
</feature>
<proteinExistence type="inferred from homology"/>
<accession>B1VG72</accession>
<gene>
    <name evidence="1" type="primary">rimM</name>
    <name type="ordered locus">cu0801</name>
</gene>
<evidence type="ECO:0000255" key="1">
    <source>
        <dbReference type="HAMAP-Rule" id="MF_00014"/>
    </source>
</evidence>
<reference key="1">
    <citation type="journal article" date="2008" name="J. Biotechnol.">
        <title>The lifestyle of Corynebacterium urealyticum derived from its complete genome sequence established by pyrosequencing.</title>
        <authorList>
            <person name="Tauch A."/>
            <person name="Trost E."/>
            <person name="Tilker A."/>
            <person name="Ludewig U."/>
            <person name="Schneiker S."/>
            <person name="Goesmann A."/>
            <person name="Arnold W."/>
            <person name="Bekel T."/>
            <person name="Brinkrolf K."/>
            <person name="Brune I."/>
            <person name="Goetker S."/>
            <person name="Kalinowski J."/>
            <person name="Kamp P.-B."/>
            <person name="Lobo F.P."/>
            <person name="Viehoever P."/>
            <person name="Weisshaar B."/>
            <person name="Soriano F."/>
            <person name="Droege M."/>
            <person name="Puehler A."/>
        </authorList>
    </citation>
    <scope>NUCLEOTIDE SEQUENCE [LARGE SCALE GENOMIC DNA]</scope>
    <source>
        <strain>ATCC 43042 / DSM 7109</strain>
    </source>
</reference>
<name>RIMM_CORU7</name>
<dbReference type="EMBL" id="AM942444">
    <property type="protein sequence ID" value="CAQ04761.1"/>
    <property type="molecule type" value="Genomic_DNA"/>
</dbReference>
<dbReference type="RefSeq" id="WP_012360050.1">
    <property type="nucleotide sequence ID" value="NC_010545.1"/>
</dbReference>
<dbReference type="SMR" id="B1VG72"/>
<dbReference type="STRING" id="504474.cu0801"/>
<dbReference type="GeneID" id="60603579"/>
<dbReference type="KEGG" id="cur:cu0801"/>
<dbReference type="eggNOG" id="COG0806">
    <property type="taxonomic scope" value="Bacteria"/>
</dbReference>
<dbReference type="HOGENOM" id="CLU_077636_0_0_11"/>
<dbReference type="Proteomes" id="UP000001727">
    <property type="component" value="Chromosome"/>
</dbReference>
<dbReference type="GO" id="GO:0005737">
    <property type="term" value="C:cytoplasm"/>
    <property type="evidence" value="ECO:0007669"/>
    <property type="project" value="UniProtKB-SubCell"/>
</dbReference>
<dbReference type="GO" id="GO:0005840">
    <property type="term" value="C:ribosome"/>
    <property type="evidence" value="ECO:0007669"/>
    <property type="project" value="InterPro"/>
</dbReference>
<dbReference type="GO" id="GO:0043022">
    <property type="term" value="F:ribosome binding"/>
    <property type="evidence" value="ECO:0007669"/>
    <property type="project" value="InterPro"/>
</dbReference>
<dbReference type="GO" id="GO:0042274">
    <property type="term" value="P:ribosomal small subunit biogenesis"/>
    <property type="evidence" value="ECO:0007669"/>
    <property type="project" value="UniProtKB-UniRule"/>
</dbReference>
<dbReference type="GO" id="GO:0006364">
    <property type="term" value="P:rRNA processing"/>
    <property type="evidence" value="ECO:0007669"/>
    <property type="project" value="UniProtKB-UniRule"/>
</dbReference>
<dbReference type="Gene3D" id="2.30.30.240">
    <property type="entry name" value="PRC-barrel domain"/>
    <property type="match status" value="1"/>
</dbReference>
<dbReference type="Gene3D" id="2.40.30.60">
    <property type="entry name" value="RimM"/>
    <property type="match status" value="1"/>
</dbReference>
<dbReference type="HAMAP" id="MF_00014">
    <property type="entry name" value="Ribosome_mat_RimM"/>
    <property type="match status" value="1"/>
</dbReference>
<dbReference type="InterPro" id="IPR011033">
    <property type="entry name" value="PRC_barrel-like_sf"/>
</dbReference>
<dbReference type="InterPro" id="IPR056792">
    <property type="entry name" value="PRC_RimM"/>
</dbReference>
<dbReference type="InterPro" id="IPR011961">
    <property type="entry name" value="RimM"/>
</dbReference>
<dbReference type="InterPro" id="IPR002676">
    <property type="entry name" value="RimM_N"/>
</dbReference>
<dbReference type="InterPro" id="IPR036976">
    <property type="entry name" value="RimM_N_sf"/>
</dbReference>
<dbReference type="InterPro" id="IPR009000">
    <property type="entry name" value="Transl_B-barrel_sf"/>
</dbReference>
<dbReference type="NCBIfam" id="TIGR02273">
    <property type="entry name" value="16S_RimM"/>
    <property type="match status" value="1"/>
</dbReference>
<dbReference type="PANTHER" id="PTHR33692">
    <property type="entry name" value="RIBOSOME MATURATION FACTOR RIMM"/>
    <property type="match status" value="1"/>
</dbReference>
<dbReference type="PANTHER" id="PTHR33692:SF1">
    <property type="entry name" value="RIBOSOME MATURATION FACTOR RIMM"/>
    <property type="match status" value="1"/>
</dbReference>
<dbReference type="Pfam" id="PF24986">
    <property type="entry name" value="PRC_RimM"/>
    <property type="match status" value="1"/>
</dbReference>
<dbReference type="Pfam" id="PF01782">
    <property type="entry name" value="RimM"/>
    <property type="match status" value="1"/>
</dbReference>
<dbReference type="SUPFAM" id="SSF50346">
    <property type="entry name" value="PRC-barrel domain"/>
    <property type="match status" value="1"/>
</dbReference>
<dbReference type="SUPFAM" id="SSF50447">
    <property type="entry name" value="Translation proteins"/>
    <property type="match status" value="1"/>
</dbReference>